<organism>
    <name type="scientific">Brucella abortus biovar 1 (strain 9-941)</name>
    <dbReference type="NCBI Taxonomy" id="262698"/>
    <lineage>
        <taxon>Bacteria</taxon>
        <taxon>Pseudomonadati</taxon>
        <taxon>Pseudomonadota</taxon>
        <taxon>Alphaproteobacteria</taxon>
        <taxon>Hyphomicrobiales</taxon>
        <taxon>Brucellaceae</taxon>
        <taxon>Brucella/Ochrobactrum group</taxon>
        <taxon>Brucella</taxon>
    </lineage>
</organism>
<keyword id="KW-0687">Ribonucleoprotein</keyword>
<keyword id="KW-0689">Ribosomal protein</keyword>
<keyword id="KW-0694">RNA-binding</keyword>
<keyword id="KW-0699">rRNA-binding</keyword>
<comment type="function">
    <text evidence="1">Binds the 23S rRNA.</text>
</comment>
<comment type="subunit">
    <text evidence="1">Part of the 50S ribosomal subunit.</text>
</comment>
<comment type="similarity">
    <text evidence="1">Belongs to the bacterial ribosomal protein bL31 family. Type A subfamily.</text>
</comment>
<feature type="chain" id="PRO_0000173084" description="Large ribosomal subunit protein bL31">
    <location>
        <begin position="1"/>
        <end position="73"/>
    </location>
</feature>
<sequence>MKANIHPDYHTIKVVMTDGTEYMTRSTWGKEGDTMNLDIDPTTHPAWTGGSQTLLDRGGRVTKFKNRFGNLGI</sequence>
<proteinExistence type="inferred from homology"/>
<dbReference type="EMBL" id="AE017223">
    <property type="protein sequence ID" value="AAX75020.1"/>
    <property type="molecule type" value="Genomic_DNA"/>
</dbReference>
<dbReference type="RefSeq" id="WP_002964804.1">
    <property type="nucleotide sequence ID" value="NC_006932.1"/>
</dbReference>
<dbReference type="SMR" id="Q57BG4"/>
<dbReference type="EnsemblBacteria" id="AAX75020">
    <property type="protein sequence ID" value="AAX75020"/>
    <property type="gene ID" value="BruAb1_1701"/>
</dbReference>
<dbReference type="GeneID" id="97533132"/>
<dbReference type="KEGG" id="bmb:BruAb1_1701"/>
<dbReference type="HOGENOM" id="CLU_114306_3_2_5"/>
<dbReference type="Proteomes" id="UP000000540">
    <property type="component" value="Chromosome I"/>
</dbReference>
<dbReference type="GO" id="GO:1990904">
    <property type="term" value="C:ribonucleoprotein complex"/>
    <property type="evidence" value="ECO:0007669"/>
    <property type="project" value="UniProtKB-KW"/>
</dbReference>
<dbReference type="GO" id="GO:0005840">
    <property type="term" value="C:ribosome"/>
    <property type="evidence" value="ECO:0007669"/>
    <property type="project" value="UniProtKB-KW"/>
</dbReference>
<dbReference type="GO" id="GO:0019843">
    <property type="term" value="F:rRNA binding"/>
    <property type="evidence" value="ECO:0007669"/>
    <property type="project" value="UniProtKB-KW"/>
</dbReference>
<dbReference type="GO" id="GO:0003735">
    <property type="term" value="F:structural constituent of ribosome"/>
    <property type="evidence" value="ECO:0007669"/>
    <property type="project" value="InterPro"/>
</dbReference>
<dbReference type="GO" id="GO:0006412">
    <property type="term" value="P:translation"/>
    <property type="evidence" value="ECO:0007669"/>
    <property type="project" value="UniProtKB-UniRule"/>
</dbReference>
<dbReference type="Gene3D" id="4.10.830.30">
    <property type="entry name" value="Ribosomal protein L31"/>
    <property type="match status" value="1"/>
</dbReference>
<dbReference type="HAMAP" id="MF_00501">
    <property type="entry name" value="Ribosomal_bL31_1"/>
    <property type="match status" value="1"/>
</dbReference>
<dbReference type="InterPro" id="IPR034704">
    <property type="entry name" value="Ribosomal_bL28/bL31-like_sf"/>
</dbReference>
<dbReference type="InterPro" id="IPR002150">
    <property type="entry name" value="Ribosomal_bL31"/>
</dbReference>
<dbReference type="InterPro" id="IPR027491">
    <property type="entry name" value="Ribosomal_bL31_A"/>
</dbReference>
<dbReference type="InterPro" id="IPR042105">
    <property type="entry name" value="Ribosomal_bL31_sf"/>
</dbReference>
<dbReference type="NCBIfam" id="TIGR00105">
    <property type="entry name" value="L31"/>
    <property type="match status" value="1"/>
</dbReference>
<dbReference type="NCBIfam" id="NF001809">
    <property type="entry name" value="PRK00528.1"/>
    <property type="match status" value="1"/>
</dbReference>
<dbReference type="PANTHER" id="PTHR33280">
    <property type="entry name" value="50S RIBOSOMAL PROTEIN L31, CHLOROPLASTIC"/>
    <property type="match status" value="1"/>
</dbReference>
<dbReference type="PANTHER" id="PTHR33280:SF6">
    <property type="entry name" value="LARGE RIBOSOMAL SUBUNIT PROTEIN BL31A"/>
    <property type="match status" value="1"/>
</dbReference>
<dbReference type="Pfam" id="PF01197">
    <property type="entry name" value="Ribosomal_L31"/>
    <property type="match status" value="1"/>
</dbReference>
<dbReference type="PRINTS" id="PR01249">
    <property type="entry name" value="RIBOSOMALL31"/>
</dbReference>
<dbReference type="SUPFAM" id="SSF143800">
    <property type="entry name" value="L28p-like"/>
    <property type="match status" value="1"/>
</dbReference>
<dbReference type="PROSITE" id="PS01143">
    <property type="entry name" value="RIBOSOMAL_L31"/>
    <property type="match status" value="1"/>
</dbReference>
<evidence type="ECO:0000255" key="1">
    <source>
        <dbReference type="HAMAP-Rule" id="MF_00501"/>
    </source>
</evidence>
<evidence type="ECO:0000305" key="2"/>
<reference key="1">
    <citation type="journal article" date="2005" name="J. Bacteriol.">
        <title>Completion of the genome sequence of Brucella abortus and comparison to the highly similar genomes of Brucella melitensis and Brucella suis.</title>
        <authorList>
            <person name="Halling S.M."/>
            <person name="Peterson-Burch B.D."/>
            <person name="Bricker B.J."/>
            <person name="Zuerner R.L."/>
            <person name="Qing Z."/>
            <person name="Li L.-L."/>
            <person name="Kapur V."/>
            <person name="Alt D.P."/>
            <person name="Olsen S.C."/>
        </authorList>
    </citation>
    <scope>NUCLEOTIDE SEQUENCE [LARGE SCALE GENOMIC DNA]</scope>
    <source>
        <strain>9-941</strain>
    </source>
</reference>
<name>RL31_BRUAB</name>
<gene>
    <name evidence="1" type="primary">rpmE</name>
    <name type="ordered locus">BruAb1_1701</name>
</gene>
<accession>Q57BG4</accession>
<protein>
    <recommendedName>
        <fullName evidence="1">Large ribosomal subunit protein bL31</fullName>
    </recommendedName>
    <alternativeName>
        <fullName evidence="2">50S ribosomal protein L31</fullName>
    </alternativeName>
</protein>